<protein>
    <recommendedName>
        <fullName evidence="1">Transcription termination/antitermination protein NusG</fullName>
    </recommendedName>
</protein>
<reference key="1">
    <citation type="submission" date="1996-02" db="EMBL/GenBank/DDBJ databases">
        <authorList>
            <person name="Poehling S."/>
            <person name="Piepersberg W."/>
            <person name="Wehmeier U.F."/>
        </authorList>
    </citation>
    <scope>NUCLEOTIDE SEQUENCE [GENOMIC DNA]</scope>
    <source>
        <strain>ATCC 14077 / CBS 700.72 / DSM 40480 / NBRC 13399 / VKM Ac-160</strain>
    </source>
</reference>
<sequence length="309" mass="33844">MSDPNLNDDATEPRGLAADTADDELDIVEAADEQDEFEAAEAEAGEPAEVAALHIEDEGDHIAETDEDIEAGAVETDEDVETDTDEDVEAGTDEDVAVAEAAEEEPAAPVDSIQALREELRTLPGEWYVIHTYAGYENRVKTNLEPRAVSLNVEDYIFQAEVPQEEVVQIKNGDRKTIKQNKLPGYVLVRMDLTNESWGVVRNTPGVTGFVGNAYDPYPLTLDEIVKMLAPEAEEKAARAEGKPAPQRKVEVQVLDFEVGASVTVTDGPFATLQTINEIKSDSKKVKGLVEIFGWETPVELSFDQIQKN</sequence>
<evidence type="ECO:0000255" key="1">
    <source>
        <dbReference type="HAMAP-Rule" id="MF_00948"/>
    </source>
</evidence>
<evidence type="ECO:0000256" key="2">
    <source>
        <dbReference type="SAM" id="MobiDB-lite"/>
    </source>
</evidence>
<name>NUSG_STRGB</name>
<dbReference type="EMBL" id="X95916">
    <property type="protein sequence ID" value="CAA65165.1"/>
    <property type="molecule type" value="Genomic_DNA"/>
</dbReference>
<dbReference type="SMR" id="P52852"/>
<dbReference type="GO" id="GO:0005829">
    <property type="term" value="C:cytosol"/>
    <property type="evidence" value="ECO:0007669"/>
    <property type="project" value="TreeGrafter"/>
</dbReference>
<dbReference type="GO" id="GO:0006353">
    <property type="term" value="P:DNA-templated transcription termination"/>
    <property type="evidence" value="ECO:0007669"/>
    <property type="project" value="UniProtKB-UniRule"/>
</dbReference>
<dbReference type="GO" id="GO:0032784">
    <property type="term" value="P:regulation of DNA-templated transcription elongation"/>
    <property type="evidence" value="ECO:0007669"/>
    <property type="project" value="InterPro"/>
</dbReference>
<dbReference type="GO" id="GO:0031564">
    <property type="term" value="P:transcription antitermination"/>
    <property type="evidence" value="ECO:0007669"/>
    <property type="project" value="UniProtKB-UniRule"/>
</dbReference>
<dbReference type="GO" id="GO:0140673">
    <property type="term" value="P:transcription elongation-coupled chromatin remodeling"/>
    <property type="evidence" value="ECO:0007669"/>
    <property type="project" value="InterPro"/>
</dbReference>
<dbReference type="CDD" id="cd06091">
    <property type="entry name" value="KOW_NusG"/>
    <property type="match status" value="1"/>
</dbReference>
<dbReference type="CDD" id="cd09891">
    <property type="entry name" value="NGN_Bact_1"/>
    <property type="match status" value="1"/>
</dbReference>
<dbReference type="FunFam" id="2.30.30.30:FF:000002">
    <property type="entry name" value="Transcription termination/antitermination factor NusG"/>
    <property type="match status" value="1"/>
</dbReference>
<dbReference type="FunFam" id="3.30.70.940:FF:000002">
    <property type="entry name" value="Transcription termination/antitermination protein NusG"/>
    <property type="match status" value="1"/>
</dbReference>
<dbReference type="Gene3D" id="2.30.30.30">
    <property type="match status" value="1"/>
</dbReference>
<dbReference type="Gene3D" id="3.30.70.940">
    <property type="entry name" value="NusG, N-terminal domain"/>
    <property type="match status" value="1"/>
</dbReference>
<dbReference type="HAMAP" id="MF_00948">
    <property type="entry name" value="NusG"/>
    <property type="match status" value="1"/>
</dbReference>
<dbReference type="InterPro" id="IPR047050">
    <property type="entry name" value="NGN"/>
</dbReference>
<dbReference type="InterPro" id="IPR006645">
    <property type="entry name" value="NGN-like_dom"/>
</dbReference>
<dbReference type="InterPro" id="IPR036735">
    <property type="entry name" value="NGN_dom_sf"/>
</dbReference>
<dbReference type="InterPro" id="IPR043425">
    <property type="entry name" value="NusG-like"/>
</dbReference>
<dbReference type="InterPro" id="IPR014722">
    <property type="entry name" value="Rib_uL2_dom2"/>
</dbReference>
<dbReference type="InterPro" id="IPR001062">
    <property type="entry name" value="Transcrpt_antiterm_NusG"/>
</dbReference>
<dbReference type="InterPro" id="IPR015869">
    <property type="entry name" value="Transcrpt_antiterm_NusG_bac_CS"/>
</dbReference>
<dbReference type="InterPro" id="IPR008991">
    <property type="entry name" value="Translation_prot_SH3-like_sf"/>
</dbReference>
<dbReference type="NCBIfam" id="TIGR00922">
    <property type="entry name" value="nusG"/>
    <property type="match status" value="1"/>
</dbReference>
<dbReference type="PANTHER" id="PTHR30265">
    <property type="entry name" value="RHO-INTERACTING TRANSCRIPTION TERMINATION FACTOR NUSG"/>
    <property type="match status" value="1"/>
</dbReference>
<dbReference type="PANTHER" id="PTHR30265:SF2">
    <property type="entry name" value="TRANSCRIPTION TERMINATION_ANTITERMINATION PROTEIN NUSG"/>
    <property type="match status" value="1"/>
</dbReference>
<dbReference type="Pfam" id="PF02357">
    <property type="entry name" value="NusG"/>
    <property type="match status" value="1"/>
</dbReference>
<dbReference type="PRINTS" id="PR00338">
    <property type="entry name" value="NUSGTNSCPFCT"/>
</dbReference>
<dbReference type="SMART" id="SM00738">
    <property type="entry name" value="NGN"/>
    <property type="match status" value="1"/>
</dbReference>
<dbReference type="SUPFAM" id="SSF82679">
    <property type="entry name" value="N-utilization substance G protein NusG, N-terminal domain"/>
    <property type="match status" value="1"/>
</dbReference>
<dbReference type="SUPFAM" id="SSF50104">
    <property type="entry name" value="Translation proteins SH3-like domain"/>
    <property type="match status" value="1"/>
</dbReference>
<dbReference type="PROSITE" id="PS01014">
    <property type="entry name" value="NUSG"/>
    <property type="match status" value="1"/>
</dbReference>
<organism>
    <name type="scientific">Streptomyces galbus</name>
    <dbReference type="NCBI Taxonomy" id="33898"/>
    <lineage>
        <taxon>Bacteria</taxon>
        <taxon>Bacillati</taxon>
        <taxon>Actinomycetota</taxon>
        <taxon>Actinomycetes</taxon>
        <taxon>Kitasatosporales</taxon>
        <taxon>Streptomycetaceae</taxon>
        <taxon>Streptomyces</taxon>
    </lineage>
</organism>
<proteinExistence type="inferred from homology"/>
<keyword id="KW-0804">Transcription</keyword>
<keyword id="KW-0889">Transcription antitermination</keyword>
<keyword id="KW-0805">Transcription regulation</keyword>
<keyword id="KW-0806">Transcription termination</keyword>
<comment type="function">
    <text evidence="1">Participates in transcription elongation, termination and antitermination.</text>
</comment>
<comment type="similarity">
    <text evidence="1">Belongs to the NusG family.</text>
</comment>
<gene>
    <name evidence="1" type="primary">nusG</name>
</gene>
<accession>P52852</accession>
<feature type="chain" id="PRO_0000113957" description="Transcription termination/antitermination protein NusG">
    <location>
        <begin position="1"/>
        <end position="309"/>
    </location>
</feature>
<feature type="region of interest" description="Disordered" evidence="2">
    <location>
        <begin position="1"/>
        <end position="24"/>
    </location>
</feature>
<feature type="region of interest" description="Disordered" evidence="2">
    <location>
        <begin position="58"/>
        <end position="91"/>
    </location>
</feature>
<feature type="compositionally biased region" description="Acidic residues" evidence="2">
    <location>
        <begin position="65"/>
        <end position="91"/>
    </location>
</feature>